<protein>
    <recommendedName>
        <fullName evidence="1">RNA polymerase-associated protein RapA</fullName>
        <ecNumber evidence="1">3.6.4.-</ecNumber>
    </recommendedName>
    <alternativeName>
        <fullName evidence="1">ATP-dependent helicase HepA</fullName>
    </alternativeName>
</protein>
<name>RAPA_SALPB</name>
<evidence type="ECO:0000255" key="1">
    <source>
        <dbReference type="HAMAP-Rule" id="MF_01821"/>
    </source>
</evidence>
<accession>A9MYN1</accession>
<sequence>MPFTLGQRWISDTESELGLGTVVAMDARTVTLLFPSTGENRLYARSDSPVTRVMFNPGDTITSHEGWQLHIDEVKEENGLLVYVGTRLDTEETNVTLREVLLDSKLVFSKPQDRLFAGQIDRMDRFALRYRARKFQSEQYRMPYSGLRGQRTNLIPHQLNIAHDVGRRHAPRVLLADEVGLGKTIEAGMILHQQLLSGAAERVLIIVPETLQHQWLVEMLRRFNLRFALFDDERYTEAQHDAYNPFETEQLVICSLDFARRNKQRLEHLCDAEWDLLVVDEAHHLVWSTDAPSREYMAIEQLAERVPGVLLLTATPEQLGMESHFARLRLLDPNRFHDFEQFVEEQKNYRPVADAVAMLLAGNKLSNDELNRLGDLIGEQDIEPLLQAANSDRDDAQAARDELVSMLMDRHGTSRVLFRNTRNGVKGFPKRELHTVKLPLPTQYQTAIKVSGIMGARKSAEDRARDMLYPEQIYQEFEGDTGTWWNFDPRVEWLMGYLTSHRSQKVLVICAKATTALQLEQVLREREGIRAAVFHEGMSIIERDRAAAWFAEEDTGAQVLLCSEIGSEGRNFQFASNLVMFDLPFNPDLLEQRIGRLDRIGQAHDIQIHVPYLEKTAQSVLVRWYHEGLDAFEHTCPTGRAIYDSAYASLINYLAAPEETDGFDDLIKSCREQHEALKAQLEQGRDRLLEIHSNGGEKAQQLAQSIEEQDDDTNLIAFAMNLFDIVGINQDDRGDNLIVLTPSDHMLVPDFPGLPEDGCTITFERDVALSREDAQFITWEHPLIRNGLDLILSGDTGSSTISLLKNKALPVGTLLVELVYVVEAQAPKQLQLNRFLPPTPVRMLLDKNGNNLAAQVEFETFNRQLSAVNRHTGSKLVNAVQQDVHAILQLGETQIEKSARALIDNARREADEKLSGELSRLEALRAVNPNIRDDELAAIDSNRQQVLESLNQAGWRLDALRLIVVTHQ</sequence>
<proteinExistence type="inferred from homology"/>
<keyword id="KW-0010">Activator</keyword>
<keyword id="KW-0067">ATP-binding</keyword>
<keyword id="KW-0238">DNA-binding</keyword>
<keyword id="KW-0347">Helicase</keyword>
<keyword id="KW-0378">Hydrolase</keyword>
<keyword id="KW-0547">Nucleotide-binding</keyword>
<keyword id="KW-0804">Transcription</keyword>
<keyword id="KW-0805">Transcription regulation</keyword>
<reference key="1">
    <citation type="submission" date="2007-11" db="EMBL/GenBank/DDBJ databases">
        <authorList>
            <consortium name="The Salmonella enterica serovar Paratyphi B Genome Sequencing Project"/>
            <person name="McClelland M."/>
            <person name="Sanderson E.K."/>
            <person name="Porwollik S."/>
            <person name="Spieth J."/>
            <person name="Clifton W.S."/>
            <person name="Fulton R."/>
            <person name="Cordes M."/>
            <person name="Wollam A."/>
            <person name="Shah N."/>
            <person name="Pepin K."/>
            <person name="Bhonagiri V."/>
            <person name="Nash W."/>
            <person name="Johnson M."/>
            <person name="Thiruvilangam P."/>
            <person name="Wilson R."/>
        </authorList>
    </citation>
    <scope>NUCLEOTIDE SEQUENCE [LARGE SCALE GENOMIC DNA]</scope>
    <source>
        <strain>ATCC BAA-1250 / SPB7</strain>
    </source>
</reference>
<organism>
    <name type="scientific">Salmonella paratyphi B (strain ATCC BAA-1250 / SPB7)</name>
    <dbReference type="NCBI Taxonomy" id="1016998"/>
    <lineage>
        <taxon>Bacteria</taxon>
        <taxon>Pseudomonadati</taxon>
        <taxon>Pseudomonadota</taxon>
        <taxon>Gammaproteobacteria</taxon>
        <taxon>Enterobacterales</taxon>
        <taxon>Enterobacteriaceae</taxon>
        <taxon>Salmonella</taxon>
    </lineage>
</organism>
<gene>
    <name evidence="1" type="primary">rapA</name>
    <name type="ordered locus">SPAB_00122</name>
</gene>
<feature type="chain" id="PRO_1000088375" description="RNA polymerase-associated protein RapA">
    <location>
        <begin position="1"/>
        <end position="968"/>
    </location>
</feature>
<feature type="domain" description="Helicase ATP-binding" evidence="1">
    <location>
        <begin position="164"/>
        <end position="334"/>
    </location>
</feature>
<feature type="domain" description="Helicase C-terminal" evidence="1">
    <location>
        <begin position="490"/>
        <end position="685"/>
    </location>
</feature>
<feature type="short sequence motif" description="DEAH box">
    <location>
        <begin position="280"/>
        <end position="283"/>
    </location>
</feature>
<feature type="binding site" evidence="1">
    <location>
        <begin position="177"/>
        <end position="184"/>
    </location>
    <ligand>
        <name>ATP</name>
        <dbReference type="ChEBI" id="CHEBI:30616"/>
    </ligand>
</feature>
<dbReference type="EC" id="3.6.4.-" evidence="1"/>
<dbReference type="EMBL" id="CP000886">
    <property type="protein sequence ID" value="ABX65565.1"/>
    <property type="molecule type" value="Genomic_DNA"/>
</dbReference>
<dbReference type="RefSeq" id="WP_001116966.1">
    <property type="nucleotide sequence ID" value="NC_010102.1"/>
</dbReference>
<dbReference type="SMR" id="A9MYN1"/>
<dbReference type="KEGG" id="spq:SPAB_00122"/>
<dbReference type="PATRIC" id="fig|1016998.12.peg.116"/>
<dbReference type="HOGENOM" id="CLU_011520_0_0_6"/>
<dbReference type="BioCyc" id="SENT1016998:SPAB_RS00480-MONOMER"/>
<dbReference type="Proteomes" id="UP000008556">
    <property type="component" value="Chromosome"/>
</dbReference>
<dbReference type="GO" id="GO:0005524">
    <property type="term" value="F:ATP binding"/>
    <property type="evidence" value="ECO:0007669"/>
    <property type="project" value="UniProtKB-UniRule"/>
</dbReference>
<dbReference type="GO" id="GO:0003677">
    <property type="term" value="F:DNA binding"/>
    <property type="evidence" value="ECO:0007669"/>
    <property type="project" value="UniProtKB-KW"/>
</dbReference>
<dbReference type="GO" id="GO:0004386">
    <property type="term" value="F:helicase activity"/>
    <property type="evidence" value="ECO:0007669"/>
    <property type="project" value="UniProtKB-UniRule"/>
</dbReference>
<dbReference type="GO" id="GO:0016817">
    <property type="term" value="F:hydrolase activity, acting on acid anhydrides"/>
    <property type="evidence" value="ECO:0007669"/>
    <property type="project" value="InterPro"/>
</dbReference>
<dbReference type="GO" id="GO:0006355">
    <property type="term" value="P:regulation of DNA-templated transcription"/>
    <property type="evidence" value="ECO:0007669"/>
    <property type="project" value="UniProtKB-UniRule"/>
</dbReference>
<dbReference type="CDD" id="cd18011">
    <property type="entry name" value="DEXDc_RapA"/>
    <property type="match status" value="1"/>
</dbReference>
<dbReference type="CDD" id="cd18793">
    <property type="entry name" value="SF2_C_SNF"/>
    <property type="match status" value="1"/>
</dbReference>
<dbReference type="FunFam" id="2.30.30.140:FF:000020">
    <property type="entry name" value="RNA polymerase-associated protein RapA"/>
    <property type="match status" value="1"/>
</dbReference>
<dbReference type="FunFam" id="3.30.360.80:FF:000001">
    <property type="entry name" value="RNA polymerase-associated protein RapA"/>
    <property type="match status" value="1"/>
</dbReference>
<dbReference type="FunFam" id="3.40.50.10810:FF:000012">
    <property type="entry name" value="RNA polymerase-associated protein RapA"/>
    <property type="match status" value="1"/>
</dbReference>
<dbReference type="FunFam" id="3.40.50.300:FF:000350">
    <property type="entry name" value="RNA polymerase-associated protein RapA"/>
    <property type="match status" value="1"/>
</dbReference>
<dbReference type="Gene3D" id="2.30.30.140">
    <property type="match status" value="1"/>
</dbReference>
<dbReference type="Gene3D" id="2.30.30.930">
    <property type="match status" value="1"/>
</dbReference>
<dbReference type="Gene3D" id="3.30.360.80">
    <property type="match status" value="1"/>
</dbReference>
<dbReference type="Gene3D" id="6.10.140.1500">
    <property type="match status" value="1"/>
</dbReference>
<dbReference type="Gene3D" id="6.10.140.2230">
    <property type="match status" value="1"/>
</dbReference>
<dbReference type="Gene3D" id="3.40.50.300">
    <property type="entry name" value="P-loop containing nucleotide triphosphate hydrolases"/>
    <property type="match status" value="1"/>
</dbReference>
<dbReference type="Gene3D" id="3.40.50.10810">
    <property type="entry name" value="Tandem AAA-ATPase domain"/>
    <property type="match status" value="1"/>
</dbReference>
<dbReference type="HAMAP" id="MF_01821">
    <property type="entry name" value="Helicase_RapA"/>
    <property type="match status" value="1"/>
</dbReference>
<dbReference type="InterPro" id="IPR014001">
    <property type="entry name" value="Helicase_ATP-bd"/>
</dbReference>
<dbReference type="InterPro" id="IPR001650">
    <property type="entry name" value="Helicase_C-like"/>
</dbReference>
<dbReference type="InterPro" id="IPR023949">
    <property type="entry name" value="Helicase_RapA"/>
</dbReference>
<dbReference type="InterPro" id="IPR027417">
    <property type="entry name" value="P-loop_NTPase"/>
</dbReference>
<dbReference type="InterPro" id="IPR022737">
    <property type="entry name" value="RapA_C"/>
</dbReference>
<dbReference type="InterPro" id="IPR038718">
    <property type="entry name" value="SNF2-like_sf"/>
</dbReference>
<dbReference type="InterPro" id="IPR049730">
    <property type="entry name" value="SNF2/RAD54-like_C"/>
</dbReference>
<dbReference type="InterPro" id="IPR000330">
    <property type="entry name" value="SNF2_N"/>
</dbReference>
<dbReference type="InterPro" id="IPR040765">
    <property type="entry name" value="Tudor_1_RapA"/>
</dbReference>
<dbReference type="InterPro" id="IPR040766">
    <property type="entry name" value="Tudor_2_RapA"/>
</dbReference>
<dbReference type="NCBIfam" id="NF003426">
    <property type="entry name" value="PRK04914.1"/>
    <property type="match status" value="1"/>
</dbReference>
<dbReference type="PANTHER" id="PTHR45766">
    <property type="entry name" value="DNA ANNEALING HELICASE AND ENDONUCLEASE ZRANB3 FAMILY MEMBER"/>
    <property type="match status" value="1"/>
</dbReference>
<dbReference type="PANTHER" id="PTHR45766:SF6">
    <property type="entry name" value="SWI_SNF-RELATED MATRIX-ASSOCIATED ACTIN-DEPENDENT REGULATOR OF CHROMATIN SUBFAMILY A-LIKE PROTEIN 1"/>
    <property type="match status" value="1"/>
</dbReference>
<dbReference type="Pfam" id="PF00271">
    <property type="entry name" value="Helicase_C"/>
    <property type="match status" value="1"/>
</dbReference>
<dbReference type="Pfam" id="PF12137">
    <property type="entry name" value="RapA_C"/>
    <property type="match status" value="1"/>
</dbReference>
<dbReference type="Pfam" id="PF00176">
    <property type="entry name" value="SNF2-rel_dom"/>
    <property type="match status" value="1"/>
</dbReference>
<dbReference type="Pfam" id="PF18339">
    <property type="entry name" value="Tudor_1_RapA"/>
    <property type="match status" value="1"/>
</dbReference>
<dbReference type="Pfam" id="PF18337">
    <property type="entry name" value="Tudor_RapA"/>
    <property type="match status" value="1"/>
</dbReference>
<dbReference type="SMART" id="SM00487">
    <property type="entry name" value="DEXDc"/>
    <property type="match status" value="1"/>
</dbReference>
<dbReference type="SMART" id="SM00490">
    <property type="entry name" value="HELICc"/>
    <property type="match status" value="1"/>
</dbReference>
<dbReference type="SUPFAM" id="SSF52540">
    <property type="entry name" value="P-loop containing nucleoside triphosphate hydrolases"/>
    <property type="match status" value="2"/>
</dbReference>
<dbReference type="PROSITE" id="PS51192">
    <property type="entry name" value="HELICASE_ATP_BIND_1"/>
    <property type="match status" value="1"/>
</dbReference>
<dbReference type="PROSITE" id="PS51194">
    <property type="entry name" value="HELICASE_CTER"/>
    <property type="match status" value="1"/>
</dbReference>
<comment type="function">
    <text evidence="1">Transcription regulator that activates transcription by stimulating RNA polymerase (RNAP) recycling in case of stress conditions such as supercoiled DNA or high salt concentrations. Probably acts by releasing the RNAP, when it is trapped or immobilized on tightly supercoiled DNA. Does not activate transcription on linear DNA. Probably not involved in DNA repair.</text>
</comment>
<comment type="subunit">
    <text evidence="1">Interacts with the RNAP. Has a higher affinity for the core RNAP than for the holoenzyme. Its ATPase activity is stimulated by binding to RNAP.</text>
</comment>
<comment type="similarity">
    <text evidence="1">Belongs to the SNF2/RAD54 helicase family. RapA subfamily.</text>
</comment>